<comment type="function">
    <text evidence="1">Catalyzes the reductive methylation of 2'-deoxyuridine-5'-monophosphate (dUMP) to 2'-deoxythymidine-5'-monophosphate (dTMP) while utilizing 5,10-methylenetetrahydrofolate (mTHF) as the methyl donor, and NADPH and FADH(2) as the reductant.</text>
</comment>
<comment type="catalytic activity">
    <reaction evidence="1">
        <text>dUMP + (6R)-5,10-methylene-5,6,7,8-tetrahydrofolate + NADPH + H(+) = dTMP + (6S)-5,6,7,8-tetrahydrofolate + NADP(+)</text>
        <dbReference type="Rhea" id="RHEA:29043"/>
        <dbReference type="ChEBI" id="CHEBI:15378"/>
        <dbReference type="ChEBI" id="CHEBI:15636"/>
        <dbReference type="ChEBI" id="CHEBI:57453"/>
        <dbReference type="ChEBI" id="CHEBI:57783"/>
        <dbReference type="ChEBI" id="CHEBI:58349"/>
        <dbReference type="ChEBI" id="CHEBI:63528"/>
        <dbReference type="ChEBI" id="CHEBI:246422"/>
        <dbReference type="EC" id="2.1.1.148"/>
    </reaction>
</comment>
<comment type="cofactor">
    <cofactor evidence="1">
        <name>FAD</name>
        <dbReference type="ChEBI" id="CHEBI:57692"/>
    </cofactor>
    <text evidence="1">Binds 4 FAD per tetramer. Each FAD binding site is formed by three monomers.</text>
</comment>
<comment type="pathway">
    <text evidence="1">Pyrimidine metabolism; dTTP biosynthesis.</text>
</comment>
<comment type="subunit">
    <text evidence="1">Homotetramer.</text>
</comment>
<comment type="similarity">
    <text evidence="1">Belongs to the thymidylate synthase ThyX family.</text>
</comment>
<reference key="1">
    <citation type="journal article" date="2005" name="Genome Res.">
        <title>Complete genome sequence of the hyperthermophilic archaeon Thermococcus kodakaraensis KOD1 and comparison with Pyrococcus genomes.</title>
        <authorList>
            <person name="Fukui T."/>
            <person name="Atomi H."/>
            <person name="Kanai T."/>
            <person name="Matsumi R."/>
            <person name="Fujiwara S."/>
            <person name="Imanaka T."/>
        </authorList>
    </citation>
    <scope>NUCLEOTIDE SEQUENCE [LARGE SCALE GENOMIC DNA]</scope>
    <source>
        <strain>ATCC BAA-918 / JCM 12380 / KOD1</strain>
    </source>
</reference>
<sequence length="245" mass="28671">MDNGIRVKLVNYTKKPLETVTWAALISYWDEWETETFGRMSDKDVEMHLPRVLGYGHESILEHATLTFAIEGCSRVCSHQLVRHRLASYTQQSQRYIVLNPEDVEETFVIPSGIKEDPELLAEWKELMKKSIELYKKSVERGQHQEDARFILPQAVRTKIVVTMNLRELKHFLGLRACERAQWEIREVAWKMLEEIAKNDELRPIIKWAKLGPRCVQLGYCPEGELMPPGCWKRTGEKWKTLFEG</sequence>
<proteinExistence type="inferred from homology"/>
<dbReference type="EC" id="2.1.1.148" evidence="1"/>
<dbReference type="EMBL" id="AP006878">
    <property type="protein sequence ID" value="BAD85059.1"/>
    <property type="molecule type" value="Genomic_DNA"/>
</dbReference>
<dbReference type="RefSeq" id="WP_011249821.1">
    <property type="nucleotide sequence ID" value="NC_006624.1"/>
</dbReference>
<dbReference type="SMR" id="Q5JI17"/>
<dbReference type="STRING" id="69014.TK0870"/>
<dbReference type="EnsemblBacteria" id="BAD85059">
    <property type="protein sequence ID" value="BAD85059"/>
    <property type="gene ID" value="TK0870"/>
</dbReference>
<dbReference type="GeneID" id="78447385"/>
<dbReference type="KEGG" id="tko:TK0870"/>
<dbReference type="PATRIC" id="fig|69014.16.peg.849"/>
<dbReference type="eggNOG" id="arCOG01883">
    <property type="taxonomic scope" value="Archaea"/>
</dbReference>
<dbReference type="HOGENOM" id="CLU_077585_0_0_2"/>
<dbReference type="InParanoid" id="Q5JI17"/>
<dbReference type="OrthoDB" id="18918at2157"/>
<dbReference type="PhylomeDB" id="Q5JI17"/>
<dbReference type="UniPathway" id="UPA00575"/>
<dbReference type="Proteomes" id="UP000000536">
    <property type="component" value="Chromosome"/>
</dbReference>
<dbReference type="GO" id="GO:0050660">
    <property type="term" value="F:flavin adenine dinucleotide binding"/>
    <property type="evidence" value="ECO:0000318"/>
    <property type="project" value="GO_Central"/>
</dbReference>
<dbReference type="GO" id="GO:0070402">
    <property type="term" value="F:NADPH binding"/>
    <property type="evidence" value="ECO:0000318"/>
    <property type="project" value="GO_Central"/>
</dbReference>
<dbReference type="GO" id="GO:0050797">
    <property type="term" value="F:thymidylate synthase (FAD) activity"/>
    <property type="evidence" value="ECO:0000318"/>
    <property type="project" value="GO_Central"/>
</dbReference>
<dbReference type="GO" id="GO:0004799">
    <property type="term" value="F:thymidylate synthase activity"/>
    <property type="evidence" value="ECO:0000318"/>
    <property type="project" value="GO_Central"/>
</dbReference>
<dbReference type="GO" id="GO:0006231">
    <property type="term" value="P:dTMP biosynthetic process"/>
    <property type="evidence" value="ECO:0000318"/>
    <property type="project" value="GO_Central"/>
</dbReference>
<dbReference type="GO" id="GO:0006235">
    <property type="term" value="P:dTTP biosynthetic process"/>
    <property type="evidence" value="ECO:0007669"/>
    <property type="project" value="UniProtKB-UniRule"/>
</dbReference>
<dbReference type="GO" id="GO:0032259">
    <property type="term" value="P:methylation"/>
    <property type="evidence" value="ECO:0007669"/>
    <property type="project" value="UniProtKB-KW"/>
</dbReference>
<dbReference type="CDD" id="cd20175">
    <property type="entry name" value="ThyX"/>
    <property type="match status" value="1"/>
</dbReference>
<dbReference type="Gene3D" id="3.30.1360.170">
    <property type="match status" value="1"/>
</dbReference>
<dbReference type="HAMAP" id="MF_01408">
    <property type="entry name" value="ThyX"/>
    <property type="match status" value="1"/>
</dbReference>
<dbReference type="InterPro" id="IPR003669">
    <property type="entry name" value="Thymidylate_synthase_ThyX"/>
</dbReference>
<dbReference type="InterPro" id="IPR036098">
    <property type="entry name" value="Thymidylate_synthase_ThyX_sf"/>
</dbReference>
<dbReference type="NCBIfam" id="TIGR02170">
    <property type="entry name" value="thyX"/>
    <property type="match status" value="1"/>
</dbReference>
<dbReference type="PANTHER" id="PTHR34934">
    <property type="entry name" value="FLAVIN-DEPENDENT THYMIDYLATE SYNTHASE"/>
    <property type="match status" value="1"/>
</dbReference>
<dbReference type="PANTHER" id="PTHR34934:SF1">
    <property type="entry name" value="FLAVIN-DEPENDENT THYMIDYLATE SYNTHASE"/>
    <property type="match status" value="1"/>
</dbReference>
<dbReference type="Pfam" id="PF02511">
    <property type="entry name" value="Thy1"/>
    <property type="match status" value="1"/>
</dbReference>
<dbReference type="SUPFAM" id="SSF69796">
    <property type="entry name" value="Thymidylate synthase-complementing protein Thy1"/>
    <property type="match status" value="1"/>
</dbReference>
<dbReference type="PROSITE" id="PS51331">
    <property type="entry name" value="THYX"/>
    <property type="match status" value="1"/>
</dbReference>
<gene>
    <name evidence="1" type="primary">thyX</name>
    <name type="ordered locus">TK0870</name>
</gene>
<evidence type="ECO:0000255" key="1">
    <source>
        <dbReference type="HAMAP-Rule" id="MF_01408"/>
    </source>
</evidence>
<evidence type="ECO:0000255" key="2">
    <source>
        <dbReference type="PROSITE-ProRule" id="PRU00661"/>
    </source>
</evidence>
<organism>
    <name type="scientific">Thermococcus kodakarensis (strain ATCC BAA-918 / JCM 12380 / KOD1)</name>
    <name type="common">Pyrococcus kodakaraensis (strain KOD1)</name>
    <dbReference type="NCBI Taxonomy" id="69014"/>
    <lineage>
        <taxon>Archaea</taxon>
        <taxon>Methanobacteriati</taxon>
        <taxon>Methanobacteriota</taxon>
        <taxon>Thermococci</taxon>
        <taxon>Thermococcales</taxon>
        <taxon>Thermococcaceae</taxon>
        <taxon>Thermococcus</taxon>
    </lineage>
</organism>
<protein>
    <recommendedName>
        <fullName evidence="1">Flavin-dependent thymidylate synthase</fullName>
        <shortName evidence="1">FDTS</shortName>
        <ecNumber evidence="1">2.1.1.148</ecNumber>
    </recommendedName>
    <alternativeName>
        <fullName evidence="1">FAD-dependent thymidylate synthase</fullName>
    </alternativeName>
    <alternativeName>
        <fullName evidence="1">Thymidylate synthase ThyX</fullName>
        <shortName evidence="1">TS</shortName>
        <shortName evidence="1">TSase</shortName>
    </alternativeName>
</protein>
<feature type="chain" id="PRO_0000175595" description="Flavin-dependent thymidylate synthase">
    <location>
        <begin position="1"/>
        <end position="245"/>
    </location>
</feature>
<feature type="domain" description="ThyX" evidence="2">
    <location>
        <begin position="5"/>
        <end position="210"/>
    </location>
</feature>
<feature type="short sequence motif" description="ThyX motif" evidence="1">
    <location>
        <begin position="83"/>
        <end position="93"/>
    </location>
</feature>
<feature type="active site" description="Involved in ionization of N3 of dUMP, leading to its activation" evidence="1">
    <location>
        <position position="176"/>
    </location>
</feature>
<feature type="binding site" evidence="1">
    <location>
        <position position="59"/>
    </location>
    <ligand>
        <name>FAD</name>
        <dbReference type="ChEBI" id="CHEBI:57692"/>
        <note>ligand shared between neighboring subunits</note>
    </ligand>
</feature>
<feature type="binding site" evidence="1">
    <location>
        <begin position="80"/>
        <end position="83"/>
    </location>
    <ligand>
        <name>dUMP</name>
        <dbReference type="ChEBI" id="CHEBI:246422"/>
        <note>ligand shared between dimeric partners</note>
    </ligand>
</feature>
<feature type="binding site" evidence="1">
    <location>
        <begin position="83"/>
        <end position="85"/>
    </location>
    <ligand>
        <name>FAD</name>
        <dbReference type="ChEBI" id="CHEBI:57692"/>
        <note>ligand shared between neighboring subunits</note>
    </ligand>
</feature>
<feature type="binding site" description="in other chain" evidence="1">
    <location>
        <begin position="91"/>
        <end position="95"/>
    </location>
    <ligand>
        <name>dUMP</name>
        <dbReference type="ChEBI" id="CHEBI:246422"/>
        <note>ligand shared between dimeric partners</note>
    </ligand>
</feature>
<feature type="binding site" evidence="1">
    <location>
        <position position="91"/>
    </location>
    <ligand>
        <name>FAD</name>
        <dbReference type="ChEBI" id="CHEBI:57692"/>
        <note>ligand shared between neighboring subunits</note>
    </ligand>
</feature>
<feature type="binding site" description="in other chain" evidence="1">
    <location>
        <position position="149"/>
    </location>
    <ligand>
        <name>dUMP</name>
        <dbReference type="ChEBI" id="CHEBI:246422"/>
        <note>ligand shared between dimeric partners</note>
    </ligand>
</feature>
<feature type="binding site" evidence="1">
    <location>
        <begin position="165"/>
        <end position="167"/>
    </location>
    <ligand>
        <name>FAD</name>
        <dbReference type="ChEBI" id="CHEBI:57692"/>
        <note>ligand shared between neighboring subunits</note>
    </ligand>
</feature>
<feature type="binding site" evidence="1">
    <location>
        <position position="171"/>
    </location>
    <ligand>
        <name>FAD</name>
        <dbReference type="ChEBI" id="CHEBI:57692"/>
        <note>ligand shared between neighboring subunits</note>
    </ligand>
</feature>
<feature type="binding site" evidence="1">
    <location>
        <position position="176"/>
    </location>
    <ligand>
        <name>dUMP</name>
        <dbReference type="ChEBI" id="CHEBI:246422"/>
        <note>ligand shared between dimeric partners</note>
    </ligand>
</feature>
<keyword id="KW-0274">FAD</keyword>
<keyword id="KW-0285">Flavoprotein</keyword>
<keyword id="KW-0489">Methyltransferase</keyword>
<keyword id="KW-0521">NADP</keyword>
<keyword id="KW-0545">Nucleotide biosynthesis</keyword>
<keyword id="KW-1185">Reference proteome</keyword>
<keyword id="KW-0808">Transferase</keyword>
<name>THYX_THEKO</name>
<accession>Q5JI17</accession>